<evidence type="ECO:0000255" key="1">
    <source>
        <dbReference type="HAMAP-Rule" id="MF_00377"/>
    </source>
</evidence>
<proteinExistence type="inferred from homology"/>
<dbReference type="EMBL" id="CP000261">
    <property type="protein sequence ID" value="ABF35053.1"/>
    <property type="molecule type" value="Genomic_DNA"/>
</dbReference>
<dbReference type="SMR" id="Q1JEA5"/>
<dbReference type="KEGG" id="spj:MGAS2096_Spy0001"/>
<dbReference type="HOGENOM" id="CLU_026910_3_2_9"/>
<dbReference type="GO" id="GO:0005737">
    <property type="term" value="C:cytoplasm"/>
    <property type="evidence" value="ECO:0007669"/>
    <property type="project" value="UniProtKB-SubCell"/>
</dbReference>
<dbReference type="GO" id="GO:0005886">
    <property type="term" value="C:plasma membrane"/>
    <property type="evidence" value="ECO:0007669"/>
    <property type="project" value="TreeGrafter"/>
</dbReference>
<dbReference type="GO" id="GO:0005524">
    <property type="term" value="F:ATP binding"/>
    <property type="evidence" value="ECO:0007669"/>
    <property type="project" value="UniProtKB-UniRule"/>
</dbReference>
<dbReference type="GO" id="GO:0016887">
    <property type="term" value="F:ATP hydrolysis activity"/>
    <property type="evidence" value="ECO:0007669"/>
    <property type="project" value="InterPro"/>
</dbReference>
<dbReference type="GO" id="GO:0003688">
    <property type="term" value="F:DNA replication origin binding"/>
    <property type="evidence" value="ECO:0007669"/>
    <property type="project" value="UniProtKB-UniRule"/>
</dbReference>
<dbReference type="GO" id="GO:0008289">
    <property type="term" value="F:lipid binding"/>
    <property type="evidence" value="ECO:0007669"/>
    <property type="project" value="UniProtKB-KW"/>
</dbReference>
<dbReference type="GO" id="GO:0006270">
    <property type="term" value="P:DNA replication initiation"/>
    <property type="evidence" value="ECO:0007669"/>
    <property type="project" value="UniProtKB-UniRule"/>
</dbReference>
<dbReference type="GO" id="GO:0006275">
    <property type="term" value="P:regulation of DNA replication"/>
    <property type="evidence" value="ECO:0007669"/>
    <property type="project" value="UniProtKB-UniRule"/>
</dbReference>
<dbReference type="CDD" id="cd00009">
    <property type="entry name" value="AAA"/>
    <property type="match status" value="1"/>
</dbReference>
<dbReference type="CDD" id="cd06571">
    <property type="entry name" value="Bac_DnaA_C"/>
    <property type="match status" value="1"/>
</dbReference>
<dbReference type="FunFam" id="1.10.1750.10:FF:000002">
    <property type="entry name" value="Chromosomal replication initiator protein DnaA"/>
    <property type="match status" value="1"/>
</dbReference>
<dbReference type="FunFam" id="3.40.50.300:FF:000668">
    <property type="entry name" value="Chromosomal replication initiator protein DnaA"/>
    <property type="match status" value="1"/>
</dbReference>
<dbReference type="Gene3D" id="1.10.1750.10">
    <property type="match status" value="1"/>
</dbReference>
<dbReference type="Gene3D" id="1.10.8.60">
    <property type="match status" value="1"/>
</dbReference>
<dbReference type="Gene3D" id="3.40.50.300">
    <property type="entry name" value="P-loop containing nucleotide triphosphate hydrolases"/>
    <property type="match status" value="1"/>
</dbReference>
<dbReference type="HAMAP" id="MF_00377">
    <property type="entry name" value="DnaA_bact"/>
    <property type="match status" value="1"/>
</dbReference>
<dbReference type="InterPro" id="IPR003593">
    <property type="entry name" value="AAA+_ATPase"/>
</dbReference>
<dbReference type="InterPro" id="IPR001957">
    <property type="entry name" value="Chromosome_initiator_DnaA"/>
</dbReference>
<dbReference type="InterPro" id="IPR020591">
    <property type="entry name" value="Chromosome_initiator_DnaA-like"/>
</dbReference>
<dbReference type="InterPro" id="IPR018312">
    <property type="entry name" value="Chromosome_initiator_DnaA_CS"/>
</dbReference>
<dbReference type="InterPro" id="IPR013159">
    <property type="entry name" value="DnaA_C"/>
</dbReference>
<dbReference type="InterPro" id="IPR013317">
    <property type="entry name" value="DnaA_dom"/>
</dbReference>
<dbReference type="InterPro" id="IPR027417">
    <property type="entry name" value="P-loop_NTPase"/>
</dbReference>
<dbReference type="InterPro" id="IPR010921">
    <property type="entry name" value="Trp_repressor/repl_initiator"/>
</dbReference>
<dbReference type="NCBIfam" id="TIGR00362">
    <property type="entry name" value="DnaA"/>
    <property type="match status" value="1"/>
</dbReference>
<dbReference type="PANTHER" id="PTHR30050">
    <property type="entry name" value="CHROMOSOMAL REPLICATION INITIATOR PROTEIN DNAA"/>
    <property type="match status" value="1"/>
</dbReference>
<dbReference type="PANTHER" id="PTHR30050:SF2">
    <property type="entry name" value="CHROMOSOMAL REPLICATION INITIATOR PROTEIN DNAA"/>
    <property type="match status" value="1"/>
</dbReference>
<dbReference type="Pfam" id="PF00308">
    <property type="entry name" value="Bac_DnaA"/>
    <property type="match status" value="1"/>
</dbReference>
<dbReference type="Pfam" id="PF08299">
    <property type="entry name" value="Bac_DnaA_C"/>
    <property type="match status" value="1"/>
</dbReference>
<dbReference type="PRINTS" id="PR00051">
    <property type="entry name" value="DNAA"/>
</dbReference>
<dbReference type="SMART" id="SM00382">
    <property type="entry name" value="AAA"/>
    <property type="match status" value="1"/>
</dbReference>
<dbReference type="SMART" id="SM00760">
    <property type="entry name" value="Bac_DnaA_C"/>
    <property type="match status" value="1"/>
</dbReference>
<dbReference type="SUPFAM" id="SSF52540">
    <property type="entry name" value="P-loop containing nucleoside triphosphate hydrolases"/>
    <property type="match status" value="1"/>
</dbReference>
<dbReference type="SUPFAM" id="SSF48295">
    <property type="entry name" value="TrpR-like"/>
    <property type="match status" value="1"/>
</dbReference>
<dbReference type="PROSITE" id="PS01008">
    <property type="entry name" value="DNAA"/>
    <property type="match status" value="1"/>
</dbReference>
<gene>
    <name evidence="1" type="primary">dnaA</name>
    <name type="ordered locus">MGAS2096_Spy0001</name>
</gene>
<keyword id="KW-0067">ATP-binding</keyword>
<keyword id="KW-0963">Cytoplasm</keyword>
<keyword id="KW-0235">DNA replication</keyword>
<keyword id="KW-0238">DNA-binding</keyword>
<keyword id="KW-0446">Lipid-binding</keyword>
<keyword id="KW-0547">Nucleotide-binding</keyword>
<name>DNAA_STRPB</name>
<organism>
    <name type="scientific">Streptococcus pyogenes serotype M12 (strain MGAS2096)</name>
    <dbReference type="NCBI Taxonomy" id="370553"/>
    <lineage>
        <taxon>Bacteria</taxon>
        <taxon>Bacillati</taxon>
        <taxon>Bacillota</taxon>
        <taxon>Bacilli</taxon>
        <taxon>Lactobacillales</taxon>
        <taxon>Streptococcaceae</taxon>
        <taxon>Streptococcus</taxon>
    </lineage>
</organism>
<protein>
    <recommendedName>
        <fullName evidence="1">Chromosomal replication initiator protein DnaA</fullName>
    </recommendedName>
</protein>
<feature type="chain" id="PRO_1000048739" description="Chromosomal replication initiator protein DnaA">
    <location>
        <begin position="1"/>
        <end position="451"/>
    </location>
</feature>
<feature type="region of interest" description="Domain I, interacts with DnaA modulators" evidence="1">
    <location>
        <begin position="1"/>
        <end position="77"/>
    </location>
</feature>
<feature type="region of interest" description="Domain II" evidence="1">
    <location>
        <begin position="77"/>
        <end position="110"/>
    </location>
</feature>
<feature type="region of interest" description="Domain III, AAA+ region" evidence="1">
    <location>
        <begin position="111"/>
        <end position="329"/>
    </location>
</feature>
<feature type="region of interest" description="Domain IV, binds dsDNA" evidence="1">
    <location>
        <begin position="330"/>
        <end position="451"/>
    </location>
</feature>
<feature type="binding site" evidence="1">
    <location>
        <position position="155"/>
    </location>
    <ligand>
        <name>ATP</name>
        <dbReference type="ChEBI" id="CHEBI:30616"/>
    </ligand>
</feature>
<feature type="binding site" evidence="1">
    <location>
        <position position="157"/>
    </location>
    <ligand>
        <name>ATP</name>
        <dbReference type="ChEBI" id="CHEBI:30616"/>
    </ligand>
</feature>
<feature type="binding site" evidence="1">
    <location>
        <position position="158"/>
    </location>
    <ligand>
        <name>ATP</name>
        <dbReference type="ChEBI" id="CHEBI:30616"/>
    </ligand>
</feature>
<feature type="binding site" evidence="1">
    <location>
        <position position="159"/>
    </location>
    <ligand>
        <name>ATP</name>
        <dbReference type="ChEBI" id="CHEBI:30616"/>
    </ligand>
</feature>
<sequence>MTENEQIFWNRVLELAQSQLKQATYEFFVHDARLLKVDKHIATIYLDQMKELFWEKNLKDVILTAGFEVYNAQISVDYVFEEDLMIEQNQTKINQKPKQQALNSLPTVTSDLNSKYSFENFIQGDENRWAVAASIAVANTPGTTYNPLFIWGGPGLGKTHLLNAIGNSVLLENPNARIKYITAENFINEFVIHIRLDTMDELKEKFRNLDLLLIDDIQSLAKKTLSGTQEEFFNTFNALHNNNKQIVLTSDRTPDHLNDLEDRLVTRFKWGLTVNITPPDFETRVAILTNKIQEYNFIFPQDTIEYLAGQFDSNVRDLEGALKDISLVANFKQIDTITVDIAAEAIRARKQDGPKMTVIPIEEIQAQVGKFYGVTVKEIKATKRTQNIVLARQVAMFLAREMTDNSLPKIGKEFGGRDHSTVLHAYNKIKNMISQDESLRIEIETIKNKIK</sequence>
<reference key="1">
    <citation type="journal article" date="2006" name="Proc. Natl. Acad. Sci. U.S.A.">
        <title>Molecular genetic anatomy of inter- and intraserotype variation in the human bacterial pathogen group A Streptococcus.</title>
        <authorList>
            <person name="Beres S.B."/>
            <person name="Richter E.W."/>
            <person name="Nagiec M.J."/>
            <person name="Sumby P."/>
            <person name="Porcella S.F."/>
            <person name="DeLeo F.R."/>
            <person name="Musser J.M."/>
        </authorList>
    </citation>
    <scope>NUCLEOTIDE SEQUENCE [LARGE SCALE GENOMIC DNA]</scope>
    <source>
        <strain>MGAS2096</strain>
    </source>
</reference>
<accession>Q1JEA5</accession>
<comment type="function">
    <text evidence="1">Plays an essential role in the initiation and regulation of chromosomal replication. ATP-DnaA binds to the origin of replication (oriC) to initiate formation of the DNA replication initiation complex once per cell cycle. Binds the DnaA box (a 9 base pair repeat at the origin) and separates the double-stranded (ds)DNA. Forms a right-handed helical filament on oriC DNA; dsDNA binds to the exterior of the filament while single-stranded (ss)DNA is stabiized in the filament's interior. The ATP-DnaA-oriC complex binds and stabilizes one strand of the AT-rich DNA unwinding element (DUE), permitting loading of DNA polymerase. After initiation quickly degrades to an ADP-DnaA complex that is not apt for DNA replication. Binds acidic phospholipids.</text>
</comment>
<comment type="subunit">
    <text evidence="1">Oligomerizes as a right-handed, spiral filament on DNA at oriC.</text>
</comment>
<comment type="subcellular location">
    <subcellularLocation>
        <location evidence="1">Cytoplasm</location>
    </subcellularLocation>
</comment>
<comment type="domain">
    <text evidence="1">Domain I is involved in oligomerization and binding regulators, domain II is flexibile and of varying length in different bacteria, domain III forms the AAA+ region, while domain IV binds dsDNA.</text>
</comment>
<comment type="similarity">
    <text evidence="1">Belongs to the DnaA family.</text>
</comment>